<feature type="chain" id="PRO_0000062437" description="Ribulose bisphosphate carboxylase large chain">
    <location>
        <begin position="1" status="less than"/>
        <end position="441" status="greater than"/>
    </location>
</feature>
<feature type="active site" description="Proton acceptor" evidence="1">
    <location>
        <position position="165"/>
    </location>
</feature>
<feature type="active site" description="Proton acceptor" evidence="1">
    <location>
        <position position="284"/>
    </location>
</feature>
<feature type="binding site" description="in homodimeric partner" evidence="1">
    <location>
        <position position="113"/>
    </location>
    <ligand>
        <name>substrate</name>
    </ligand>
</feature>
<feature type="binding site" evidence="1">
    <location>
        <position position="163"/>
    </location>
    <ligand>
        <name>substrate</name>
    </ligand>
</feature>
<feature type="binding site" evidence="1">
    <location>
        <position position="167"/>
    </location>
    <ligand>
        <name>substrate</name>
    </ligand>
</feature>
<feature type="binding site" description="via carbamate group" evidence="1">
    <location>
        <position position="191"/>
    </location>
    <ligand>
        <name>Mg(2+)</name>
        <dbReference type="ChEBI" id="CHEBI:18420"/>
    </ligand>
</feature>
<feature type="binding site" evidence="1">
    <location>
        <position position="193"/>
    </location>
    <ligand>
        <name>Mg(2+)</name>
        <dbReference type="ChEBI" id="CHEBI:18420"/>
    </ligand>
</feature>
<feature type="binding site" evidence="1">
    <location>
        <position position="194"/>
    </location>
    <ligand>
        <name>Mg(2+)</name>
        <dbReference type="ChEBI" id="CHEBI:18420"/>
    </ligand>
</feature>
<feature type="binding site" evidence="1">
    <location>
        <position position="285"/>
    </location>
    <ligand>
        <name>substrate</name>
    </ligand>
</feature>
<feature type="binding site" evidence="1">
    <location>
        <position position="317"/>
    </location>
    <ligand>
        <name>substrate</name>
    </ligand>
</feature>
<feature type="binding site" evidence="1">
    <location>
        <position position="369"/>
    </location>
    <ligand>
        <name>substrate</name>
    </ligand>
</feature>
<feature type="site" description="Transition state stabilizer" evidence="1">
    <location>
        <position position="324"/>
    </location>
</feature>
<feature type="modified residue" description="N6,N6,N6-trimethyllysine" evidence="1">
    <location>
        <position position="4"/>
    </location>
</feature>
<feature type="modified residue" description="N6-carboxylysine" evidence="1">
    <location>
        <position position="191"/>
    </location>
</feature>
<feature type="disulfide bond" description="Interchain; in linked form" evidence="1">
    <location>
        <position position="237"/>
    </location>
</feature>
<feature type="non-terminal residue">
    <location>
        <position position="1"/>
    </location>
</feature>
<feature type="non-terminal residue">
    <location>
        <position position="441"/>
    </location>
</feature>
<comment type="function">
    <text evidence="1">RuBisCO catalyzes two reactions: the carboxylation of D-ribulose 1,5-bisphosphate, the primary event in carbon dioxide fixation, as well as the oxidative fragmentation of the pentose substrate in the photorespiration process. Both reactions occur simultaneously and in competition at the same active site.</text>
</comment>
<comment type="catalytic activity">
    <reaction evidence="1">
        <text>2 (2R)-3-phosphoglycerate + 2 H(+) = D-ribulose 1,5-bisphosphate + CO2 + H2O</text>
        <dbReference type="Rhea" id="RHEA:23124"/>
        <dbReference type="ChEBI" id="CHEBI:15377"/>
        <dbReference type="ChEBI" id="CHEBI:15378"/>
        <dbReference type="ChEBI" id="CHEBI:16526"/>
        <dbReference type="ChEBI" id="CHEBI:57870"/>
        <dbReference type="ChEBI" id="CHEBI:58272"/>
        <dbReference type="EC" id="4.1.1.39"/>
    </reaction>
</comment>
<comment type="catalytic activity">
    <reaction evidence="1">
        <text>D-ribulose 1,5-bisphosphate + O2 = 2-phosphoglycolate + (2R)-3-phosphoglycerate + 2 H(+)</text>
        <dbReference type="Rhea" id="RHEA:36631"/>
        <dbReference type="ChEBI" id="CHEBI:15378"/>
        <dbReference type="ChEBI" id="CHEBI:15379"/>
        <dbReference type="ChEBI" id="CHEBI:57870"/>
        <dbReference type="ChEBI" id="CHEBI:58033"/>
        <dbReference type="ChEBI" id="CHEBI:58272"/>
    </reaction>
</comment>
<comment type="cofactor">
    <cofactor evidence="1">
        <name>Mg(2+)</name>
        <dbReference type="ChEBI" id="CHEBI:18420"/>
    </cofactor>
    <text evidence="1">Binds 1 Mg(2+) ion per subunit.</text>
</comment>
<comment type="subunit">
    <text evidence="1">Heterohexadecamer of 8 large chains and 8 small chains; disulfide-linked. The disulfide link is formed within the large subunit homodimers.</text>
</comment>
<comment type="subcellular location">
    <subcellularLocation>
        <location>Plastid</location>
        <location>Chloroplast</location>
    </subcellularLocation>
</comment>
<comment type="PTM">
    <text evidence="1">The disulfide bond which can form in the large chain dimeric partners within the hexadecamer appears to be associated with oxidative stress and protein turnover.</text>
</comment>
<comment type="miscellaneous">
    <text evidence="1">The basic functional RuBisCO is composed of a large chain homodimer in a 'head-to-tail' conformation. In form I RuBisCO this homodimer is arranged in a barrel-like tetramer with the small subunits forming a tetrameric 'cap' on each end of the 'barrel'.</text>
</comment>
<comment type="similarity">
    <text evidence="1">Belongs to the RuBisCO large chain family. Type I subfamily.</text>
</comment>
<sequence>VGFKAGVKDYKLTYYTPDYETKDTDILAAFRVTPQPGVPPEEAGAAVAAESSTGTWTTVWTDGLTSLDRYKGRCYHIEPVAGEENQYIAYVAYPLDLFEEGSVTNMFTSIVGNVFGFKALRALRLEDLRIPPAYSKTFQGPPHGIQVERDKLNKYGRPLLGCTIKPKLGLSAKNYGRAVYECLRGGLDFTKDDENVNSQPFMRWRDRFLFCAEAIYKAQAETGEIKGHYLNATAGTCEEMIKRAVFARELGVPIVMHDYLTGGFTANTSLSHYCRDNGLLLHIHRAMHAVIDRQKNHGIHFRVLAKALRMSGGDHIHSGTVVGKLEGERDITLGFVDLLRDDYIEKDRARGIYFSQDWVSLPGVLPVASGGIHVWHMPALTEIFGDDSVLQFGGGTLGHPWGNAPGAVANRVALEACVQARNEGRDLAREGNEIIREARKW</sequence>
<organism>
    <name type="scientific">Darlingtonia californica</name>
    <name type="common">California pitcher plant</name>
    <name type="synonym">Chrysamphora californica</name>
    <dbReference type="NCBI Taxonomy" id="4355"/>
    <lineage>
        <taxon>Eukaryota</taxon>
        <taxon>Viridiplantae</taxon>
        <taxon>Streptophyta</taxon>
        <taxon>Embryophyta</taxon>
        <taxon>Tracheophyta</taxon>
        <taxon>Spermatophyta</taxon>
        <taxon>Magnoliopsida</taxon>
        <taxon>eudicotyledons</taxon>
        <taxon>Gunneridae</taxon>
        <taxon>Pentapetalae</taxon>
        <taxon>asterids</taxon>
        <taxon>Ericales</taxon>
        <taxon>Sarraceniaceae</taxon>
        <taxon>Darlingtonia</taxon>
    </lineage>
</organism>
<geneLocation type="chloroplast"/>
<proteinExistence type="inferred from homology"/>
<name>RBL_DARCA</name>
<protein>
    <recommendedName>
        <fullName evidence="1">Ribulose bisphosphate carboxylase large chain</fullName>
        <shortName evidence="1">RuBisCO large subunit</shortName>
        <ecNumber evidence="1">4.1.1.39</ecNumber>
    </recommendedName>
</protein>
<evidence type="ECO:0000255" key="1">
    <source>
        <dbReference type="HAMAP-Rule" id="MF_01338"/>
    </source>
</evidence>
<gene>
    <name evidence="1" type="primary">rbcL</name>
</gene>
<dbReference type="EC" id="4.1.1.39" evidence="1"/>
<dbReference type="EMBL" id="L02432">
    <property type="protein sequence ID" value="AAA16291.2"/>
    <property type="molecule type" value="Genomic_DNA"/>
</dbReference>
<dbReference type="SMR" id="P28398"/>
<dbReference type="GO" id="GO:0009507">
    <property type="term" value="C:chloroplast"/>
    <property type="evidence" value="ECO:0007669"/>
    <property type="project" value="UniProtKB-SubCell"/>
</dbReference>
<dbReference type="GO" id="GO:0000287">
    <property type="term" value="F:magnesium ion binding"/>
    <property type="evidence" value="ECO:0007669"/>
    <property type="project" value="InterPro"/>
</dbReference>
<dbReference type="GO" id="GO:0004497">
    <property type="term" value="F:monooxygenase activity"/>
    <property type="evidence" value="ECO:0007669"/>
    <property type="project" value="UniProtKB-KW"/>
</dbReference>
<dbReference type="GO" id="GO:0016984">
    <property type="term" value="F:ribulose-bisphosphate carboxylase activity"/>
    <property type="evidence" value="ECO:0007669"/>
    <property type="project" value="UniProtKB-EC"/>
</dbReference>
<dbReference type="GO" id="GO:0009853">
    <property type="term" value="P:photorespiration"/>
    <property type="evidence" value="ECO:0007669"/>
    <property type="project" value="UniProtKB-KW"/>
</dbReference>
<dbReference type="GO" id="GO:0019253">
    <property type="term" value="P:reductive pentose-phosphate cycle"/>
    <property type="evidence" value="ECO:0007669"/>
    <property type="project" value="UniProtKB-KW"/>
</dbReference>
<dbReference type="CDD" id="cd08212">
    <property type="entry name" value="RuBisCO_large_I"/>
    <property type="match status" value="1"/>
</dbReference>
<dbReference type="FunFam" id="3.20.20.110:FF:000003">
    <property type="entry name" value="Ribulose bisphosphate carboxylase large chain"/>
    <property type="match status" value="1"/>
</dbReference>
<dbReference type="FunFam" id="3.30.70.150:FF:000001">
    <property type="entry name" value="Ribulose bisphosphate carboxylase large chain"/>
    <property type="match status" value="1"/>
</dbReference>
<dbReference type="Gene3D" id="3.20.20.110">
    <property type="entry name" value="Ribulose bisphosphate carboxylase, large subunit, C-terminal domain"/>
    <property type="match status" value="1"/>
</dbReference>
<dbReference type="Gene3D" id="3.30.70.150">
    <property type="entry name" value="RuBisCO large subunit, N-terminal domain"/>
    <property type="match status" value="1"/>
</dbReference>
<dbReference type="HAMAP" id="MF_01338">
    <property type="entry name" value="RuBisCO_L_type1"/>
    <property type="match status" value="1"/>
</dbReference>
<dbReference type="InterPro" id="IPR033966">
    <property type="entry name" value="RuBisCO"/>
</dbReference>
<dbReference type="InterPro" id="IPR020878">
    <property type="entry name" value="RuBisCo_large_chain_AS"/>
</dbReference>
<dbReference type="InterPro" id="IPR000685">
    <property type="entry name" value="RuBisCO_lsu_C"/>
</dbReference>
<dbReference type="InterPro" id="IPR036376">
    <property type="entry name" value="RuBisCO_lsu_C_sf"/>
</dbReference>
<dbReference type="InterPro" id="IPR017443">
    <property type="entry name" value="RuBisCO_lsu_fd_N"/>
</dbReference>
<dbReference type="InterPro" id="IPR036422">
    <property type="entry name" value="RuBisCO_lsu_N_sf"/>
</dbReference>
<dbReference type="InterPro" id="IPR020888">
    <property type="entry name" value="RuBisCO_lsuI"/>
</dbReference>
<dbReference type="NCBIfam" id="NF003252">
    <property type="entry name" value="PRK04208.1"/>
    <property type="match status" value="1"/>
</dbReference>
<dbReference type="PANTHER" id="PTHR42704">
    <property type="entry name" value="RIBULOSE BISPHOSPHATE CARBOXYLASE"/>
    <property type="match status" value="1"/>
</dbReference>
<dbReference type="PANTHER" id="PTHR42704:SF15">
    <property type="entry name" value="RIBULOSE BISPHOSPHATE CARBOXYLASE LARGE CHAIN"/>
    <property type="match status" value="1"/>
</dbReference>
<dbReference type="Pfam" id="PF00016">
    <property type="entry name" value="RuBisCO_large"/>
    <property type="match status" value="1"/>
</dbReference>
<dbReference type="Pfam" id="PF02788">
    <property type="entry name" value="RuBisCO_large_N"/>
    <property type="match status" value="1"/>
</dbReference>
<dbReference type="SFLD" id="SFLDG01052">
    <property type="entry name" value="RuBisCO"/>
    <property type="match status" value="1"/>
</dbReference>
<dbReference type="SFLD" id="SFLDS00014">
    <property type="entry name" value="RuBisCO"/>
    <property type="match status" value="1"/>
</dbReference>
<dbReference type="SFLD" id="SFLDG00301">
    <property type="entry name" value="RuBisCO-like_proteins"/>
    <property type="match status" value="1"/>
</dbReference>
<dbReference type="SUPFAM" id="SSF51649">
    <property type="entry name" value="RuBisCo, C-terminal domain"/>
    <property type="match status" value="1"/>
</dbReference>
<dbReference type="SUPFAM" id="SSF54966">
    <property type="entry name" value="RuBisCO, large subunit, small (N-terminal) domain"/>
    <property type="match status" value="1"/>
</dbReference>
<dbReference type="PROSITE" id="PS00157">
    <property type="entry name" value="RUBISCO_LARGE"/>
    <property type="match status" value="1"/>
</dbReference>
<keyword id="KW-0113">Calvin cycle</keyword>
<keyword id="KW-0120">Carbon dioxide fixation</keyword>
<keyword id="KW-0150">Chloroplast</keyword>
<keyword id="KW-1015">Disulfide bond</keyword>
<keyword id="KW-0456">Lyase</keyword>
<keyword id="KW-0460">Magnesium</keyword>
<keyword id="KW-0479">Metal-binding</keyword>
<keyword id="KW-0488">Methylation</keyword>
<keyword id="KW-0503">Monooxygenase</keyword>
<keyword id="KW-0560">Oxidoreductase</keyword>
<keyword id="KW-0601">Photorespiration</keyword>
<keyword id="KW-0602">Photosynthesis</keyword>
<keyword id="KW-0934">Plastid</keyword>
<accession>P28398</accession>
<reference key="1">
    <citation type="journal article" date="1992" name="Science">
        <title>Carnivorous plants: phylogeny and structural evolution.</title>
        <authorList>
            <person name="Albert V.A."/>
            <person name="Williams S.E."/>
            <person name="Chase M.W."/>
        </authorList>
    </citation>
    <scope>NUCLEOTIDE SEQUENCE [GENOMIC DNA]</scope>
</reference>